<proteinExistence type="inferred from homology"/>
<organism>
    <name type="scientific">Salmonella heidelberg (strain SL476)</name>
    <dbReference type="NCBI Taxonomy" id="454169"/>
    <lineage>
        <taxon>Bacteria</taxon>
        <taxon>Pseudomonadati</taxon>
        <taxon>Pseudomonadota</taxon>
        <taxon>Gammaproteobacteria</taxon>
        <taxon>Enterobacterales</taxon>
        <taxon>Enterobacteriaceae</taxon>
        <taxon>Salmonella</taxon>
    </lineage>
</organism>
<accession>B4TFD6</accession>
<feature type="chain" id="PRO_1000132630" description="Replication restart protein PriB">
    <location>
        <begin position="1"/>
        <end position="104"/>
    </location>
</feature>
<feature type="domain" description="SSB" evidence="1">
    <location>
        <begin position="1"/>
        <end position="101"/>
    </location>
</feature>
<reference key="1">
    <citation type="journal article" date="2011" name="J. Bacteriol.">
        <title>Comparative genomics of 28 Salmonella enterica isolates: evidence for CRISPR-mediated adaptive sublineage evolution.</title>
        <authorList>
            <person name="Fricke W.F."/>
            <person name="Mammel M.K."/>
            <person name="McDermott P.F."/>
            <person name="Tartera C."/>
            <person name="White D.G."/>
            <person name="Leclerc J.E."/>
            <person name="Ravel J."/>
            <person name="Cebula T.A."/>
        </authorList>
    </citation>
    <scope>NUCLEOTIDE SEQUENCE [LARGE SCALE GENOMIC DNA]</scope>
    <source>
        <strain>SL476</strain>
    </source>
</reference>
<sequence>MTNRLALSGTVCRAPLRKVSPSGIPHCQFVLEHRSVQEEAGFHRQAWCQMPVIVSGHENQAITHSITVGSRITVQGFISCHKAKNGLSKMVLHAEQIELIDSGD</sequence>
<gene>
    <name evidence="1" type="primary">priB</name>
    <name type="ordered locus">SeHA_C4810</name>
</gene>
<comment type="function">
    <text evidence="1">Involved in the restart of stalled replication forks, which reloads the replicative helicase on sites other than the origin of replication; the PriA-PriB pathway is the major replication restart pathway. During primosome assembly it facilitates complex formation between PriA and DnaT on DNA; stabilizes PriA on DNA. Stimulates the DNA unwinding activity of PriA helicase.</text>
</comment>
<comment type="subunit">
    <text evidence="1">Homodimer. Interacts with PriA and DnaT. Component of the replication restart primosome. Primosome assembly occurs via a 'hand-off' mechanism. PriA binds to replication forks, subsequently PriB then DnaT bind; DnaT then displaces ssDNA to generate the helicase loading substrate.</text>
</comment>
<comment type="similarity">
    <text evidence="1">Belongs to the PriB family.</text>
</comment>
<protein>
    <recommendedName>
        <fullName evidence="1">Replication restart protein PriB</fullName>
    </recommendedName>
</protein>
<name>PRIB_SALHS</name>
<keyword id="KW-0235">DNA replication</keyword>
<keyword id="KW-0238">DNA-binding</keyword>
<keyword id="KW-0639">Primosome</keyword>
<evidence type="ECO:0000255" key="1">
    <source>
        <dbReference type="HAMAP-Rule" id="MF_00720"/>
    </source>
</evidence>
<dbReference type="EMBL" id="CP001120">
    <property type="protein sequence ID" value="ACF69957.1"/>
    <property type="molecule type" value="Genomic_DNA"/>
</dbReference>
<dbReference type="RefSeq" id="WP_001519453.1">
    <property type="nucleotide sequence ID" value="NC_011083.1"/>
</dbReference>
<dbReference type="SMR" id="B4TFD6"/>
<dbReference type="GeneID" id="66758616"/>
<dbReference type="KEGG" id="seh:SeHA_C4810"/>
<dbReference type="HOGENOM" id="CLU_166075_0_0_6"/>
<dbReference type="Proteomes" id="UP000001866">
    <property type="component" value="Chromosome"/>
</dbReference>
<dbReference type="GO" id="GO:1990077">
    <property type="term" value="C:primosome complex"/>
    <property type="evidence" value="ECO:0007669"/>
    <property type="project" value="UniProtKB-KW"/>
</dbReference>
<dbReference type="GO" id="GO:0003697">
    <property type="term" value="F:single-stranded DNA binding"/>
    <property type="evidence" value="ECO:0007669"/>
    <property type="project" value="UniProtKB-UniRule"/>
</dbReference>
<dbReference type="GO" id="GO:0006269">
    <property type="term" value="P:DNA replication, synthesis of primer"/>
    <property type="evidence" value="ECO:0007669"/>
    <property type="project" value="UniProtKB-KW"/>
</dbReference>
<dbReference type="CDD" id="cd04496">
    <property type="entry name" value="SSB_OBF"/>
    <property type="match status" value="1"/>
</dbReference>
<dbReference type="FunFam" id="2.40.50.140:FF:000077">
    <property type="entry name" value="Primosomal replication protein N"/>
    <property type="match status" value="1"/>
</dbReference>
<dbReference type="Gene3D" id="2.40.50.140">
    <property type="entry name" value="Nucleic acid-binding proteins"/>
    <property type="match status" value="1"/>
</dbReference>
<dbReference type="HAMAP" id="MF_00720">
    <property type="entry name" value="PriB"/>
    <property type="match status" value="1"/>
</dbReference>
<dbReference type="InterPro" id="IPR012340">
    <property type="entry name" value="NA-bd_OB-fold"/>
</dbReference>
<dbReference type="InterPro" id="IPR000424">
    <property type="entry name" value="Primosome_PriB/ssb"/>
</dbReference>
<dbReference type="InterPro" id="IPR023646">
    <property type="entry name" value="Prisomal_replication_PriB"/>
</dbReference>
<dbReference type="NCBIfam" id="TIGR04418">
    <property type="entry name" value="PriB_gamma"/>
    <property type="match status" value="1"/>
</dbReference>
<dbReference type="Pfam" id="PF22657">
    <property type="entry name" value="SSB_1"/>
    <property type="match status" value="1"/>
</dbReference>
<dbReference type="PIRSF" id="PIRSF003135">
    <property type="entry name" value="Primosomal_n"/>
    <property type="match status" value="1"/>
</dbReference>
<dbReference type="SUPFAM" id="SSF50249">
    <property type="entry name" value="Nucleic acid-binding proteins"/>
    <property type="match status" value="1"/>
</dbReference>
<dbReference type="PROSITE" id="PS50935">
    <property type="entry name" value="SSB"/>
    <property type="match status" value="1"/>
</dbReference>